<evidence type="ECO:0000250" key="1"/>
<evidence type="ECO:0000255" key="2">
    <source>
        <dbReference type="HAMAP-Rule" id="MF_01109"/>
    </source>
</evidence>
<evidence type="ECO:0000305" key="3"/>
<feature type="chain" id="PRO_0000112911" description="Ornithine carbamoyltransferase, catabolic">
    <location>
        <begin position="1"/>
        <end position="331"/>
    </location>
</feature>
<feature type="binding site" evidence="2">
    <location>
        <begin position="57"/>
        <end position="60"/>
    </location>
    <ligand>
        <name>carbamoyl phosphate</name>
        <dbReference type="ChEBI" id="CHEBI:58228"/>
    </ligand>
</feature>
<feature type="binding site" evidence="2">
    <location>
        <position position="82"/>
    </location>
    <ligand>
        <name>carbamoyl phosphate</name>
        <dbReference type="ChEBI" id="CHEBI:58228"/>
    </ligand>
</feature>
<feature type="binding site" evidence="2">
    <location>
        <position position="106"/>
    </location>
    <ligand>
        <name>carbamoyl phosphate</name>
        <dbReference type="ChEBI" id="CHEBI:58228"/>
    </ligand>
</feature>
<feature type="binding site" evidence="2">
    <location>
        <begin position="133"/>
        <end position="136"/>
    </location>
    <ligand>
        <name>carbamoyl phosphate</name>
        <dbReference type="ChEBI" id="CHEBI:58228"/>
    </ligand>
</feature>
<feature type="binding site" evidence="2">
    <location>
        <position position="166"/>
    </location>
    <ligand>
        <name>L-ornithine</name>
        <dbReference type="ChEBI" id="CHEBI:46911"/>
    </ligand>
</feature>
<feature type="binding site" evidence="2">
    <location>
        <position position="230"/>
    </location>
    <ligand>
        <name>L-ornithine</name>
        <dbReference type="ChEBI" id="CHEBI:46911"/>
    </ligand>
</feature>
<feature type="binding site" evidence="2">
    <location>
        <begin position="234"/>
        <end position="235"/>
    </location>
    <ligand>
        <name>L-ornithine</name>
        <dbReference type="ChEBI" id="CHEBI:46911"/>
    </ligand>
</feature>
<feature type="binding site" evidence="2">
    <location>
        <begin position="272"/>
        <end position="273"/>
    </location>
    <ligand>
        <name>carbamoyl phosphate</name>
        <dbReference type="ChEBI" id="CHEBI:58228"/>
    </ligand>
</feature>
<feature type="binding site" evidence="2">
    <location>
        <position position="317"/>
    </location>
    <ligand>
        <name>carbamoyl phosphate</name>
        <dbReference type="ChEBI" id="CHEBI:58228"/>
    </ligand>
</feature>
<feature type="sequence conflict" description="In Ref. 1; CAA66365." evidence="3" ref="1">
    <original>E</original>
    <variation>A</variation>
    <location>
        <position position="154"/>
    </location>
</feature>
<feature type="sequence conflict" description="In Ref. 1; CAA66365." evidence="3" ref="1">
    <original>D</original>
    <variation>H</variation>
    <location>
        <position position="162"/>
    </location>
</feature>
<feature type="sequence conflict" description="In Ref. 1; CAA66365." evidence="3" ref="1">
    <original>MMDR</original>
    <variation>RWID</variation>
    <location>
        <begin position="287"/>
        <end position="290"/>
    </location>
</feature>
<comment type="function">
    <text evidence="1">Reversibly catalyzes the transfer of the carbamoyl group from carbamoyl phosphate (CP) to the N(epsilon) atom of ornithine (ORN) to produce L-citrulline.</text>
</comment>
<comment type="catalytic activity">
    <reaction>
        <text>carbamoyl phosphate + L-ornithine = L-citrulline + phosphate + H(+)</text>
        <dbReference type="Rhea" id="RHEA:19513"/>
        <dbReference type="ChEBI" id="CHEBI:15378"/>
        <dbReference type="ChEBI" id="CHEBI:43474"/>
        <dbReference type="ChEBI" id="CHEBI:46911"/>
        <dbReference type="ChEBI" id="CHEBI:57743"/>
        <dbReference type="ChEBI" id="CHEBI:58228"/>
        <dbReference type="EC" id="2.1.3.3"/>
    </reaction>
</comment>
<comment type="pathway">
    <text>Amino-acid degradation; L-arginine degradation via ADI pathway; carbamoyl phosphate from L-arginine: step 2/2.</text>
</comment>
<comment type="subcellular location">
    <subcellularLocation>
        <location evidence="1">Cytoplasm</location>
    </subcellularLocation>
</comment>
<comment type="similarity">
    <text evidence="3">Belongs to the aspartate/ornithine carbamoyltransferase superfamily. OTCase family.</text>
</comment>
<dbReference type="EC" id="2.1.3.3"/>
<dbReference type="EMBL" id="X97768">
    <property type="protein sequence ID" value="CAA66365.1"/>
    <property type="molecule type" value="Genomic_DNA"/>
</dbReference>
<dbReference type="EMBL" id="BA000016">
    <property type="protein sequence ID" value="BAB79875.1"/>
    <property type="molecule type" value="Genomic_DNA"/>
</dbReference>
<dbReference type="SMR" id="P0C2E4"/>
<dbReference type="STRING" id="195102.gene:10489413"/>
<dbReference type="KEGG" id="cpe:CPE0169"/>
<dbReference type="HOGENOM" id="CLU_043846_3_1_9"/>
<dbReference type="UniPathway" id="UPA00254">
    <property type="reaction ID" value="UER00365"/>
</dbReference>
<dbReference type="Proteomes" id="UP000000818">
    <property type="component" value="Chromosome"/>
</dbReference>
<dbReference type="GO" id="GO:0005737">
    <property type="term" value="C:cytoplasm"/>
    <property type="evidence" value="ECO:0007669"/>
    <property type="project" value="UniProtKB-SubCell"/>
</dbReference>
<dbReference type="GO" id="GO:0016597">
    <property type="term" value="F:amino acid binding"/>
    <property type="evidence" value="ECO:0007669"/>
    <property type="project" value="InterPro"/>
</dbReference>
<dbReference type="GO" id="GO:0004585">
    <property type="term" value="F:ornithine carbamoyltransferase activity"/>
    <property type="evidence" value="ECO:0007669"/>
    <property type="project" value="UniProtKB-UniRule"/>
</dbReference>
<dbReference type="GO" id="GO:0042450">
    <property type="term" value="P:arginine biosynthetic process via ornithine"/>
    <property type="evidence" value="ECO:0007669"/>
    <property type="project" value="TreeGrafter"/>
</dbReference>
<dbReference type="GO" id="GO:0019547">
    <property type="term" value="P:arginine catabolic process to ornithine"/>
    <property type="evidence" value="ECO:0007669"/>
    <property type="project" value="UniProtKB-UniRule"/>
</dbReference>
<dbReference type="GO" id="GO:0019240">
    <property type="term" value="P:citrulline biosynthetic process"/>
    <property type="evidence" value="ECO:0007669"/>
    <property type="project" value="TreeGrafter"/>
</dbReference>
<dbReference type="FunFam" id="3.40.50.1370:FF:000008">
    <property type="entry name" value="Ornithine carbamoyltransferase"/>
    <property type="match status" value="1"/>
</dbReference>
<dbReference type="Gene3D" id="3.40.50.1370">
    <property type="entry name" value="Aspartate/ornithine carbamoyltransferase"/>
    <property type="match status" value="2"/>
</dbReference>
<dbReference type="HAMAP" id="MF_01109">
    <property type="entry name" value="OTCase"/>
    <property type="match status" value="1"/>
</dbReference>
<dbReference type="InterPro" id="IPR006132">
    <property type="entry name" value="Asp/Orn_carbamoyltranf_P-bd"/>
</dbReference>
<dbReference type="InterPro" id="IPR006130">
    <property type="entry name" value="Asp/Orn_carbamoylTrfase"/>
</dbReference>
<dbReference type="InterPro" id="IPR036901">
    <property type="entry name" value="Asp/Orn_carbamoylTrfase_sf"/>
</dbReference>
<dbReference type="InterPro" id="IPR006131">
    <property type="entry name" value="Asp_carbamoyltransf_Asp/Orn-bd"/>
</dbReference>
<dbReference type="InterPro" id="IPR002292">
    <property type="entry name" value="Orn/put_carbamltrans"/>
</dbReference>
<dbReference type="InterPro" id="IPR024904">
    <property type="entry name" value="OTCase_ArgI"/>
</dbReference>
<dbReference type="NCBIfam" id="TIGR00658">
    <property type="entry name" value="orni_carb_tr"/>
    <property type="match status" value="1"/>
</dbReference>
<dbReference type="NCBIfam" id="NF003286">
    <property type="entry name" value="PRK04284.1"/>
    <property type="match status" value="1"/>
</dbReference>
<dbReference type="PANTHER" id="PTHR45753:SF2">
    <property type="entry name" value="ORNITHINE CARBAMOYLTRANSFERASE"/>
    <property type="match status" value="1"/>
</dbReference>
<dbReference type="PANTHER" id="PTHR45753">
    <property type="entry name" value="ORNITHINE CARBAMOYLTRANSFERASE, MITOCHONDRIAL"/>
    <property type="match status" value="1"/>
</dbReference>
<dbReference type="Pfam" id="PF00185">
    <property type="entry name" value="OTCace"/>
    <property type="match status" value="1"/>
</dbReference>
<dbReference type="Pfam" id="PF02729">
    <property type="entry name" value="OTCace_N"/>
    <property type="match status" value="1"/>
</dbReference>
<dbReference type="PRINTS" id="PR00100">
    <property type="entry name" value="AOTCASE"/>
</dbReference>
<dbReference type="PRINTS" id="PR00102">
    <property type="entry name" value="OTCASE"/>
</dbReference>
<dbReference type="SUPFAM" id="SSF53671">
    <property type="entry name" value="Aspartate/ornithine carbamoyltransferase"/>
    <property type="match status" value="1"/>
</dbReference>
<dbReference type="PROSITE" id="PS00097">
    <property type="entry name" value="CARBAMOYLTRANSFERASE"/>
    <property type="match status" value="1"/>
</dbReference>
<sequence length="331" mass="37153">MAVNLKGRSFLTLKDFTPAEIRYLLDLSHDLKAKKRAGILGDSLKGKNVVLLFEKTSTRTRCAFECGAAEEGAHVTFLTNSQMGKKESIEDTAKVLGRMYDGIEFRGFKQSTVEELAKHAGVPVWNGLTDADHPTQILADFLTIEEHAHKPLSEIKLVFTGDTRNNMSYALMYGAAKMGMHFVALGPDSLKPDEDILKEMQEYSKETGATIEFSSNVDEAVKGADVIYTDIWVSMGEDESLYPERVKLLTPYKVTREMMNKTGNKNTLFMHCLPSFHDEDTEVCKDMMDRLGLDIREVEDEVFRSKNSVVFDEAENRMHTIKAVMVATAGR</sequence>
<name>OTCC_CLOPE</name>
<organism>
    <name type="scientific">Clostridium perfringens (strain 13 / Type A)</name>
    <dbReference type="NCBI Taxonomy" id="195102"/>
    <lineage>
        <taxon>Bacteria</taxon>
        <taxon>Bacillati</taxon>
        <taxon>Bacillota</taxon>
        <taxon>Clostridia</taxon>
        <taxon>Eubacteriales</taxon>
        <taxon>Clostridiaceae</taxon>
        <taxon>Clostridium</taxon>
    </lineage>
</organism>
<accession>P0C2E4</accession>
<accession>Q46169</accession>
<accession>Q46255</accession>
<protein>
    <recommendedName>
        <fullName>Ornithine carbamoyltransferase, catabolic</fullName>
        <shortName>OTCase</shortName>
        <ecNumber>2.1.3.3</ecNumber>
    </recommendedName>
</protein>
<keyword id="KW-0056">Arginine metabolism</keyword>
<keyword id="KW-0963">Cytoplasm</keyword>
<keyword id="KW-1185">Reference proteome</keyword>
<keyword id="KW-0808">Transferase</keyword>
<reference key="1">
    <citation type="journal article" date="1997" name="FEMS Microbiol. Lett.">
        <title>Collagenase gene (colA) is located in the 3'-flanking region of the perfringolysin O (pfoA) locus in Clostridium perfringens.</title>
        <authorList>
            <person name="Ohtani K."/>
            <person name="Bando M."/>
            <person name="Swe T."/>
            <person name="Banu S."/>
            <person name="Oe M."/>
            <person name="Hayashi H."/>
            <person name="Shimizu T."/>
        </authorList>
    </citation>
    <scope>NUCLEOTIDE SEQUENCE [GENOMIC DNA]</scope>
    <source>
        <strain>13 / Type A</strain>
    </source>
</reference>
<reference key="2">
    <citation type="journal article" date="2002" name="Proc. Natl. Acad. Sci. U.S.A.">
        <title>Complete genome sequence of Clostridium perfringens, an anaerobic flesh-eater.</title>
        <authorList>
            <person name="Shimizu T."/>
            <person name="Ohtani K."/>
            <person name="Hirakawa H."/>
            <person name="Ohshima K."/>
            <person name="Yamashita A."/>
            <person name="Shiba T."/>
            <person name="Ogasawara N."/>
            <person name="Hattori M."/>
            <person name="Kuhara S."/>
            <person name="Hayashi H."/>
        </authorList>
    </citation>
    <scope>NUCLEOTIDE SEQUENCE [LARGE SCALE GENOMIC DNA]</scope>
    <source>
        <strain>13 / Type A</strain>
    </source>
</reference>
<proteinExistence type="inferred from homology"/>
<gene>
    <name type="primary">arcB</name>
    <name type="ordered locus">CPE0169</name>
</gene>